<dbReference type="EC" id="1.14.-.-"/>
<dbReference type="EMBL" id="AE000516">
    <property type="protein sequence ID" value="AAK45032.1"/>
    <property type="molecule type" value="Genomic_DNA"/>
</dbReference>
<dbReference type="PIR" id="A70707">
    <property type="entry name" value="A70707"/>
</dbReference>
<dbReference type="RefSeq" id="WP_003403911.1">
    <property type="nucleotide sequence ID" value="NZ_KK341227.1"/>
</dbReference>
<dbReference type="SMR" id="P9WPP4"/>
<dbReference type="KEGG" id="mtc:MT0790"/>
<dbReference type="PATRIC" id="fig|83331.31.peg.849"/>
<dbReference type="HOGENOM" id="CLU_033716_0_0_11"/>
<dbReference type="Proteomes" id="UP000001020">
    <property type="component" value="Chromosome"/>
</dbReference>
<dbReference type="GO" id="GO:0036199">
    <property type="term" value="F:cholest-4-en-3-one 26-monooxygenase activity"/>
    <property type="evidence" value="ECO:0007669"/>
    <property type="project" value="TreeGrafter"/>
</dbReference>
<dbReference type="GO" id="GO:0020037">
    <property type="term" value="F:heme binding"/>
    <property type="evidence" value="ECO:0007669"/>
    <property type="project" value="InterPro"/>
</dbReference>
<dbReference type="GO" id="GO:0005506">
    <property type="term" value="F:iron ion binding"/>
    <property type="evidence" value="ECO:0007669"/>
    <property type="project" value="InterPro"/>
</dbReference>
<dbReference type="GO" id="GO:0008395">
    <property type="term" value="F:steroid hydroxylase activity"/>
    <property type="evidence" value="ECO:0007669"/>
    <property type="project" value="TreeGrafter"/>
</dbReference>
<dbReference type="GO" id="GO:0006707">
    <property type="term" value="P:cholesterol catabolic process"/>
    <property type="evidence" value="ECO:0007669"/>
    <property type="project" value="TreeGrafter"/>
</dbReference>
<dbReference type="CDD" id="cd11078">
    <property type="entry name" value="CYP130-like"/>
    <property type="match status" value="1"/>
</dbReference>
<dbReference type="FunFam" id="1.10.630.10:FF:000018">
    <property type="entry name" value="Cytochrome P450 monooxygenase"/>
    <property type="match status" value="1"/>
</dbReference>
<dbReference type="Gene3D" id="1.10.630.10">
    <property type="entry name" value="Cytochrome P450"/>
    <property type="match status" value="1"/>
</dbReference>
<dbReference type="InterPro" id="IPR001128">
    <property type="entry name" value="Cyt_P450"/>
</dbReference>
<dbReference type="InterPro" id="IPR002397">
    <property type="entry name" value="Cyt_P450_B"/>
</dbReference>
<dbReference type="InterPro" id="IPR017972">
    <property type="entry name" value="Cyt_P450_CS"/>
</dbReference>
<dbReference type="InterPro" id="IPR036396">
    <property type="entry name" value="Cyt_P450_sf"/>
</dbReference>
<dbReference type="PANTHER" id="PTHR46696:SF4">
    <property type="entry name" value="BIOTIN BIOSYNTHESIS CYTOCHROME P450"/>
    <property type="match status" value="1"/>
</dbReference>
<dbReference type="PANTHER" id="PTHR46696">
    <property type="entry name" value="P450, PUTATIVE (EUROFUNG)-RELATED"/>
    <property type="match status" value="1"/>
</dbReference>
<dbReference type="Pfam" id="PF00067">
    <property type="entry name" value="p450"/>
    <property type="match status" value="1"/>
</dbReference>
<dbReference type="PRINTS" id="PR00359">
    <property type="entry name" value="BP450"/>
</dbReference>
<dbReference type="PRINTS" id="PR00385">
    <property type="entry name" value="P450"/>
</dbReference>
<dbReference type="SUPFAM" id="SSF48264">
    <property type="entry name" value="Cytochrome P450"/>
    <property type="match status" value="1"/>
</dbReference>
<dbReference type="PROSITE" id="PS00086">
    <property type="entry name" value="CYTOCHROME_P450"/>
    <property type="match status" value="1"/>
</dbReference>
<gene>
    <name type="primary">cyp123</name>
    <name type="ordered locus">MT0790</name>
</gene>
<reference key="1">
    <citation type="journal article" date="2002" name="J. Bacteriol.">
        <title>Whole-genome comparison of Mycobacterium tuberculosis clinical and laboratory strains.</title>
        <authorList>
            <person name="Fleischmann R.D."/>
            <person name="Alland D."/>
            <person name="Eisen J.A."/>
            <person name="Carpenter L."/>
            <person name="White O."/>
            <person name="Peterson J.D."/>
            <person name="DeBoy R.T."/>
            <person name="Dodson R.J."/>
            <person name="Gwinn M.L."/>
            <person name="Haft D.H."/>
            <person name="Hickey E.K."/>
            <person name="Kolonay J.F."/>
            <person name="Nelson W.C."/>
            <person name="Umayam L.A."/>
            <person name="Ermolaeva M.D."/>
            <person name="Salzberg S.L."/>
            <person name="Delcher A."/>
            <person name="Utterback T.R."/>
            <person name="Weidman J.F."/>
            <person name="Khouri H.M."/>
            <person name="Gill J."/>
            <person name="Mikula A."/>
            <person name="Bishai W."/>
            <person name="Jacobs W.R. Jr."/>
            <person name="Venter J.C."/>
            <person name="Fraser C.M."/>
        </authorList>
    </citation>
    <scope>NUCLEOTIDE SEQUENCE [LARGE SCALE GENOMIC DNA]</scope>
    <source>
        <strain>CDC 1551 / Oshkosh</strain>
    </source>
</reference>
<feature type="chain" id="PRO_0000426916" description="Putative cytochrome P450 123">
    <location>
        <begin position="1"/>
        <end position="402"/>
    </location>
</feature>
<feature type="binding site" description="axial binding residue" evidence="1">
    <location>
        <position position="350"/>
    </location>
    <ligand>
        <name>heme</name>
        <dbReference type="ChEBI" id="CHEBI:30413"/>
    </ligand>
    <ligandPart>
        <name>Fe</name>
        <dbReference type="ChEBI" id="CHEBI:18248"/>
    </ligandPart>
</feature>
<proteinExistence type="inferred from homology"/>
<comment type="cofactor">
    <cofactor evidence="1">
        <name>heme</name>
        <dbReference type="ChEBI" id="CHEBI:30413"/>
    </cofactor>
</comment>
<comment type="similarity">
    <text evidence="2">Belongs to the cytochrome P450 family.</text>
</comment>
<sequence length="402" mass="45421">MTVRVGDPELVLDPYDYDFHEDPYPYYRRLRDEAPLYRNEERNFWAVSRHHDVLQGFRDSTALSNAYGVSLDPSSRTSEAYRVMSMLAMDDPAHLRMRTLVSKGFTPRRIRELEPQVLELARIHLDSALQTESFDFVAEFAGKLPMDVISELIGVPDTDRARIRALADAVLHREDGVADVPPPAMAASIELMRYYADLIAEFRRRPANNLTSALLAAELDGDRLSDQEIMAFLFLMVIAGNETTTKLLANAVYWAAHHPGQLARVFADHSRIPMWVEETLRYDTSSQILARTVAHDLTLYDTTIPEGEVLLLLPGSANRDDRVFDDPDDYRIGREIGCKLVSFGSGAHFCLGAHLARMEARVALGALLRRIRNYEVDDDNVVRVHSSNVRGFAHLPISVQAR</sequence>
<evidence type="ECO:0000250" key="1"/>
<evidence type="ECO:0000305" key="2"/>
<accession>P9WPP4</accession>
<accession>L0T7F5</accession>
<accession>P63707</accession>
<accession>P77902</accession>
<name>CP123_MYCTO</name>
<organism>
    <name type="scientific">Mycobacterium tuberculosis (strain CDC 1551 / Oshkosh)</name>
    <dbReference type="NCBI Taxonomy" id="83331"/>
    <lineage>
        <taxon>Bacteria</taxon>
        <taxon>Bacillati</taxon>
        <taxon>Actinomycetota</taxon>
        <taxon>Actinomycetes</taxon>
        <taxon>Mycobacteriales</taxon>
        <taxon>Mycobacteriaceae</taxon>
        <taxon>Mycobacterium</taxon>
        <taxon>Mycobacterium tuberculosis complex</taxon>
    </lineage>
</organism>
<protein>
    <recommendedName>
        <fullName>Putative cytochrome P450 123</fullName>
        <ecNumber>1.14.-.-</ecNumber>
    </recommendedName>
</protein>
<keyword id="KW-0349">Heme</keyword>
<keyword id="KW-0408">Iron</keyword>
<keyword id="KW-0479">Metal-binding</keyword>
<keyword id="KW-0503">Monooxygenase</keyword>
<keyword id="KW-0560">Oxidoreductase</keyword>
<keyword id="KW-1185">Reference proteome</keyword>